<reference key="1">
    <citation type="submission" date="2007-09" db="EMBL/GenBank/DDBJ databases">
        <title>Complete genome sequence of Rickettsia rickettsii.</title>
        <authorList>
            <person name="Madan A."/>
            <person name="Fahey J."/>
            <person name="Helton E."/>
            <person name="Ketteman M."/>
            <person name="Madan A."/>
            <person name="Rodrigues S."/>
            <person name="Sanchez A."/>
            <person name="Dasch G."/>
            <person name="Eremeeva M."/>
        </authorList>
    </citation>
    <scope>NUCLEOTIDE SEQUENCE [LARGE SCALE GENOMIC DNA]</scope>
    <source>
        <strain>Sheila Smith</strain>
    </source>
</reference>
<name>TRUA_RICRS</name>
<sequence>MYRYKITIEYLGTDLAGWQRQAGVMSVQQILEEAIYKFSGEQVILFGAGRTDAGVHAVGQVAHFDLSKYLEPHKIITAINYFVRPYAVGVWNCELAPNNFHARFSATSRYYIYRIINRPYPSVIDLNRAWWISSPLDVPAMQQAAAYLLGKHDFTSFRASSCQSKSPIKTLTELNIIKEDEEIKLYLSAPSFLHHMVRNIVGSLVLVGKNIWQAEQIKDVLEAKDRKAAGPTAPASGLYFVKAAY</sequence>
<feature type="chain" id="PRO_1000017159" description="tRNA pseudouridine synthase A">
    <location>
        <begin position="1"/>
        <end position="245"/>
    </location>
</feature>
<feature type="active site" description="Nucleophile" evidence="1">
    <location>
        <position position="52"/>
    </location>
</feature>
<feature type="binding site" evidence="1">
    <location>
        <position position="111"/>
    </location>
    <ligand>
        <name>substrate</name>
    </ligand>
</feature>
<dbReference type="EC" id="5.4.99.12" evidence="1"/>
<dbReference type="EMBL" id="CP000848">
    <property type="protein sequence ID" value="ABV76892.1"/>
    <property type="molecule type" value="Genomic_DNA"/>
</dbReference>
<dbReference type="RefSeq" id="WP_012151431.1">
    <property type="nucleotide sequence ID" value="NZ_CP121767.1"/>
</dbReference>
<dbReference type="SMR" id="A8GU17"/>
<dbReference type="GeneID" id="79937925"/>
<dbReference type="KEGG" id="rri:A1G_07265"/>
<dbReference type="HOGENOM" id="CLU_014673_0_2_5"/>
<dbReference type="Proteomes" id="UP000006832">
    <property type="component" value="Chromosome"/>
</dbReference>
<dbReference type="GO" id="GO:0003723">
    <property type="term" value="F:RNA binding"/>
    <property type="evidence" value="ECO:0007669"/>
    <property type="project" value="InterPro"/>
</dbReference>
<dbReference type="GO" id="GO:0160147">
    <property type="term" value="F:tRNA pseudouridine(38-40) synthase activity"/>
    <property type="evidence" value="ECO:0007669"/>
    <property type="project" value="UniProtKB-EC"/>
</dbReference>
<dbReference type="GO" id="GO:0031119">
    <property type="term" value="P:tRNA pseudouridine synthesis"/>
    <property type="evidence" value="ECO:0007669"/>
    <property type="project" value="UniProtKB-UniRule"/>
</dbReference>
<dbReference type="CDD" id="cd02570">
    <property type="entry name" value="PseudoU_synth_EcTruA"/>
    <property type="match status" value="1"/>
</dbReference>
<dbReference type="FunFam" id="3.30.70.580:FF:000001">
    <property type="entry name" value="tRNA pseudouridine synthase A"/>
    <property type="match status" value="1"/>
</dbReference>
<dbReference type="Gene3D" id="3.30.70.660">
    <property type="entry name" value="Pseudouridine synthase I, catalytic domain, C-terminal subdomain"/>
    <property type="match status" value="1"/>
</dbReference>
<dbReference type="Gene3D" id="3.30.70.580">
    <property type="entry name" value="Pseudouridine synthase I, catalytic domain, N-terminal subdomain"/>
    <property type="match status" value="1"/>
</dbReference>
<dbReference type="HAMAP" id="MF_00171">
    <property type="entry name" value="TruA"/>
    <property type="match status" value="1"/>
</dbReference>
<dbReference type="InterPro" id="IPR020103">
    <property type="entry name" value="PsdUridine_synth_cat_dom_sf"/>
</dbReference>
<dbReference type="InterPro" id="IPR001406">
    <property type="entry name" value="PsdUridine_synth_TruA"/>
</dbReference>
<dbReference type="InterPro" id="IPR020097">
    <property type="entry name" value="PsdUridine_synth_TruA_a/b_dom"/>
</dbReference>
<dbReference type="InterPro" id="IPR020095">
    <property type="entry name" value="PsdUridine_synth_TruA_C"/>
</dbReference>
<dbReference type="InterPro" id="IPR020094">
    <property type="entry name" value="TruA/RsuA/RluB/E/F_N"/>
</dbReference>
<dbReference type="NCBIfam" id="TIGR00071">
    <property type="entry name" value="hisT_truA"/>
    <property type="match status" value="1"/>
</dbReference>
<dbReference type="PANTHER" id="PTHR11142">
    <property type="entry name" value="PSEUDOURIDYLATE SYNTHASE"/>
    <property type="match status" value="1"/>
</dbReference>
<dbReference type="PANTHER" id="PTHR11142:SF0">
    <property type="entry name" value="TRNA PSEUDOURIDINE SYNTHASE-LIKE 1"/>
    <property type="match status" value="1"/>
</dbReference>
<dbReference type="Pfam" id="PF01416">
    <property type="entry name" value="PseudoU_synth_1"/>
    <property type="match status" value="2"/>
</dbReference>
<dbReference type="PIRSF" id="PIRSF001430">
    <property type="entry name" value="tRNA_psdUrid_synth"/>
    <property type="match status" value="1"/>
</dbReference>
<dbReference type="SUPFAM" id="SSF55120">
    <property type="entry name" value="Pseudouridine synthase"/>
    <property type="match status" value="1"/>
</dbReference>
<protein>
    <recommendedName>
        <fullName evidence="1">tRNA pseudouridine synthase A</fullName>
        <ecNumber evidence="1">5.4.99.12</ecNumber>
    </recommendedName>
    <alternativeName>
        <fullName evidence="1">tRNA pseudouridine(38-40) synthase</fullName>
    </alternativeName>
    <alternativeName>
        <fullName evidence="1">tRNA pseudouridylate synthase I</fullName>
    </alternativeName>
    <alternativeName>
        <fullName evidence="1">tRNA-uridine isomerase I</fullName>
    </alternativeName>
</protein>
<gene>
    <name evidence="1" type="primary">truA</name>
    <name type="ordered locus">A1G_07265</name>
</gene>
<accession>A8GU17</accession>
<comment type="function">
    <text evidence="1">Formation of pseudouridine at positions 38, 39 and 40 in the anticodon stem and loop of transfer RNAs.</text>
</comment>
<comment type="catalytic activity">
    <reaction evidence="1">
        <text>uridine(38/39/40) in tRNA = pseudouridine(38/39/40) in tRNA</text>
        <dbReference type="Rhea" id="RHEA:22376"/>
        <dbReference type="Rhea" id="RHEA-COMP:10085"/>
        <dbReference type="Rhea" id="RHEA-COMP:10087"/>
        <dbReference type="ChEBI" id="CHEBI:65314"/>
        <dbReference type="ChEBI" id="CHEBI:65315"/>
        <dbReference type="EC" id="5.4.99.12"/>
    </reaction>
</comment>
<comment type="subunit">
    <text evidence="1">Homodimer.</text>
</comment>
<comment type="similarity">
    <text evidence="1">Belongs to the tRNA pseudouridine synthase TruA family.</text>
</comment>
<organism>
    <name type="scientific">Rickettsia rickettsii (strain Sheila Smith)</name>
    <dbReference type="NCBI Taxonomy" id="392021"/>
    <lineage>
        <taxon>Bacteria</taxon>
        <taxon>Pseudomonadati</taxon>
        <taxon>Pseudomonadota</taxon>
        <taxon>Alphaproteobacteria</taxon>
        <taxon>Rickettsiales</taxon>
        <taxon>Rickettsiaceae</taxon>
        <taxon>Rickettsieae</taxon>
        <taxon>Rickettsia</taxon>
        <taxon>spotted fever group</taxon>
    </lineage>
</organism>
<evidence type="ECO:0000255" key="1">
    <source>
        <dbReference type="HAMAP-Rule" id="MF_00171"/>
    </source>
</evidence>
<keyword id="KW-0413">Isomerase</keyword>
<keyword id="KW-0819">tRNA processing</keyword>
<proteinExistence type="inferred from homology"/>